<name>TAE2_SALTI</name>
<reference evidence="8" key="1">
    <citation type="journal article" date="2003" name="J. Bacteriol.">
        <title>Comparative genomics of Salmonella enterica serovar Typhi strains Ty2 and CT18.</title>
        <authorList>
            <person name="Deng W."/>
            <person name="Liou S.-R."/>
            <person name="Plunkett G. III"/>
            <person name="Mayhew G.F."/>
            <person name="Rose D.J."/>
            <person name="Burland V."/>
            <person name="Kodoyianni V."/>
            <person name="Schwartz D.C."/>
            <person name="Blattner F.R."/>
        </authorList>
    </citation>
    <scope>NUCLEOTIDE SEQUENCE [LARGE SCALE GENOMIC DNA]</scope>
    <source>
        <strain>ATCC 700931 / Ty2</strain>
    </source>
</reference>
<reference key="2">
    <citation type="journal article" date="2012" name="Cell Host Microbe">
        <title>A widespread bacterial type VI secretion effector superfamily identified using a heuristic approach.</title>
        <authorList>
            <person name="Russell A.B."/>
            <person name="Singh P."/>
            <person name="Brittnacher M."/>
            <person name="Bui N.K."/>
            <person name="Hood R.D."/>
            <person name="Carl M.A."/>
            <person name="Agnello D.M."/>
            <person name="Schwarz S."/>
            <person name="Goodlett D.R."/>
            <person name="Vollmer W."/>
            <person name="Mougous J.D."/>
        </authorList>
    </citation>
    <scope>FUNCTION</scope>
    <scope>CATALYTIC ACTIVITY</scope>
    <scope>PATHWAY</scope>
    <scope>SUBCELLULAR LOCATION</scope>
    <source>
        <strain>ATCC 700931 / Ty2</strain>
    </source>
</reference>
<reference evidence="9" key="3">
    <citation type="journal article" date="2020" name="Cell">
        <title>Ticks resist skin commensals with immune factor of bacterial origin.</title>
        <authorList>
            <person name="Hayes B.M."/>
            <person name="Radkov A.D."/>
            <person name="Yarza F."/>
            <person name="Flores S."/>
            <person name="Kim J."/>
            <person name="Zhao Z."/>
            <person name="Lexa K.W."/>
            <person name="Marnin L."/>
            <person name="Biboy J."/>
            <person name="Bowcut V."/>
            <person name="Vollmer W."/>
            <person name="Pedra J.H.F."/>
            <person name="Chou S."/>
        </authorList>
    </citation>
    <scope>X-RAY CRYSTALLOGRAPHY (2.05 ANGSTROMS) OF 2-133</scope>
    <scope>FUNCTION</scope>
    <scope>ACTIVE SITE</scope>
    <scope>MUTAGENESIS OF CYS-23</scope>
    <source>
        <strain>ATCC 700931 / Ty2</strain>
    </source>
</reference>
<protein>
    <recommendedName>
        <fullName evidence="3">Type VI secretion amidase effector 2 protein</fullName>
        <shortName evidence="3">Tae2</shortName>
        <ecNumber evidence="6">3.4.-.-</ecNumber>
    </recommendedName>
    <alternativeName>
        <fullName evidence="5">Peptidoglycan endopeptidase Tae2</fullName>
    </alternativeName>
</protein>
<evidence type="ECO:0000269" key="1">
    <source>
    </source>
</evidence>
<evidence type="ECO:0000269" key="2">
    <source>
    </source>
</evidence>
<evidence type="ECO:0000303" key="3">
    <source>
    </source>
</evidence>
<evidence type="ECO:0000303" key="4">
    <source>
    </source>
</evidence>
<evidence type="ECO:0000305" key="5"/>
<evidence type="ECO:0000305" key="6">
    <source>
    </source>
</evidence>
<evidence type="ECO:0000305" key="7">
    <source>
    </source>
</evidence>
<evidence type="ECO:0000312" key="8">
    <source>
        <dbReference type="EMBL" id="AAO70164.1"/>
    </source>
</evidence>
<evidence type="ECO:0007829" key="9">
    <source>
        <dbReference type="PDB" id="6WIN"/>
    </source>
</evidence>
<proteinExistence type="evidence at protein level"/>
<keyword id="KW-0002">3D-structure</keyword>
<keyword id="KW-0961">Cell wall biogenesis/degradation</keyword>
<keyword id="KW-1049">Host periplasm</keyword>
<keyword id="KW-0378">Hydrolase</keyword>
<keyword id="KW-0964">Secreted</keyword>
<keyword id="KW-0800">Toxin</keyword>
<feature type="chain" id="PRO_0000459099" description="Type VI secretion amidase effector 2 protein">
    <location>
        <begin position="1"/>
        <end position="133"/>
    </location>
</feature>
<feature type="active site" evidence="7">
    <location>
        <position position="23"/>
    </location>
</feature>
<feature type="active site" evidence="7">
    <location>
        <position position="73"/>
    </location>
</feature>
<feature type="mutagenesis site" description="No longer degrades peptidoglycan." evidence="2">
    <original>C</original>
    <variation>A</variation>
    <location>
        <position position="23"/>
    </location>
</feature>
<sequence>MPYVYANAKALQDTEKVGNHHQCVELIQHYIRVGQASTWQQGAAVFGNKNIEVGTVIATFVNGRYPNHNSGNHAAFFLGQDTGGIWVMDQWKDDIAKPRVSKRYIRKLHNGSVRSDGTYIRMSNNAEAYFIVE</sequence>
<organism>
    <name type="scientific">Salmonella typhi</name>
    <dbReference type="NCBI Taxonomy" id="90370"/>
    <lineage>
        <taxon>Bacteria</taxon>
        <taxon>Pseudomonadati</taxon>
        <taxon>Pseudomonadota</taxon>
        <taxon>Gammaproteobacteria</taxon>
        <taxon>Enterobacterales</taxon>
        <taxon>Enterobacteriaceae</taxon>
        <taxon>Salmonella</taxon>
    </lineage>
</organism>
<dbReference type="EC" id="3.4.-.-" evidence="6"/>
<dbReference type="EMBL" id="AE014613">
    <property type="protein sequence ID" value="AAO70164.1"/>
    <property type="molecule type" value="Genomic_DNA"/>
</dbReference>
<dbReference type="RefSeq" id="WP_001147174.1">
    <property type="nucleotide sequence ID" value="NZ_WSUR01000037.1"/>
</dbReference>
<dbReference type="PDB" id="6WIN">
    <property type="method" value="X-ray"/>
    <property type="resolution" value="2.05 A"/>
    <property type="chains" value="A=2-133"/>
</dbReference>
<dbReference type="PDBsum" id="6WIN"/>
<dbReference type="SMR" id="P0DW66"/>
<dbReference type="KEGG" id="stt:t2586"/>
<dbReference type="OMA" id="NAEAYFI"/>
<dbReference type="OrthoDB" id="1551241at2"/>
<dbReference type="UniPathway" id="UPA00549"/>
<dbReference type="Proteomes" id="UP000002670">
    <property type="component" value="Chromosome"/>
</dbReference>
<dbReference type="GO" id="GO:0005576">
    <property type="term" value="C:extracellular region"/>
    <property type="evidence" value="ECO:0007669"/>
    <property type="project" value="UniProtKB-SubCell"/>
</dbReference>
<dbReference type="GO" id="GO:0044229">
    <property type="term" value="C:host cell periplasmic space"/>
    <property type="evidence" value="ECO:0007669"/>
    <property type="project" value="UniProtKB-SubCell"/>
</dbReference>
<dbReference type="GO" id="GO:0016787">
    <property type="term" value="F:hydrolase activity"/>
    <property type="evidence" value="ECO:0007669"/>
    <property type="project" value="UniProtKB-KW"/>
</dbReference>
<dbReference type="GO" id="GO:0090729">
    <property type="term" value="F:toxin activity"/>
    <property type="evidence" value="ECO:0007669"/>
    <property type="project" value="UniProtKB-KW"/>
</dbReference>
<dbReference type="GO" id="GO:0016998">
    <property type="term" value="P:cell wall macromolecule catabolic process"/>
    <property type="evidence" value="ECO:0007669"/>
    <property type="project" value="UniProtKB-UniPathway"/>
</dbReference>
<dbReference type="GO" id="GO:0071555">
    <property type="term" value="P:cell wall organization"/>
    <property type="evidence" value="ECO:0007669"/>
    <property type="project" value="UniProtKB-KW"/>
</dbReference>
<dbReference type="InterPro" id="IPR047746">
    <property type="entry name" value="Dae2/Tae2-like"/>
</dbReference>
<dbReference type="NCBIfam" id="NF033857">
    <property type="entry name" value="BPSL0067_fam"/>
    <property type="match status" value="1"/>
</dbReference>
<gene>
    <name evidence="4" type="primary">tae2</name>
    <name evidence="8" type="ordered locus">t2586</name>
</gene>
<comment type="function">
    <text evidence="1 2">Toxic component of a contact-dependent interbacterial competition system (also called effector-immunity systems) (PubMed:22607806). Secreted by the SPI-6 type VI secretion system, probably into the periplasm of bacterial target cells (PubMed:22607806). A cell wall amidase with specificity toward the D-meso-DAP-D-alanine bond (D-meso-diaminopimelic-D-alanine) found in peptidoglycan of Gram-negative bacteria (PubMed:22607806). Toxicity is counteracted by a cognate immunity protein Tai2 (t2585), but not immunity proteins associated with a similar endopeptidase in other bacteria (PubMed:22607806). In vitro degrades peptidoglycans from Gram-negative but not Gram-positive bacteria (PubMed:33306955).</text>
</comment>
<comment type="pathway">
    <text evidence="1">Cell wall degradation; peptidoglycan degradation.</text>
</comment>
<comment type="subcellular location">
    <subcellularLocation>
        <location evidence="6">Host periplasm</location>
    </subcellularLocation>
    <subcellularLocation>
        <location evidence="6">Secreted</location>
    </subcellularLocation>
    <text evidence="6">Delivered to the target cell periplasm by the SPI-6 type 6 secretion system (T6SS).</text>
</comment>
<comment type="similarity">
    <text evidence="5">Belongs to the cell wall amidase Dae2/Tae2-like family.</text>
</comment>
<accession>P0DW66</accession>